<sequence>MLKKLYSKKGQVSMEMGILVASAVAVAAIASYFYAVNVKYSDTHAGETAKNTSNALINVTENVCGNISEITIP</sequence>
<accession>Q6LZU5</accession>
<reference key="1">
    <citation type="journal article" date="2004" name="J. Bacteriol.">
        <title>Complete genome sequence of the genetically tractable hydrogenotrophic methanogen Methanococcus maripaludis.</title>
        <authorList>
            <person name="Hendrickson E.L."/>
            <person name="Kaul R."/>
            <person name="Zhou Y."/>
            <person name="Bovee D."/>
            <person name="Chapman P."/>
            <person name="Chung J."/>
            <person name="Conway de Macario E."/>
            <person name="Dodsworth J.A."/>
            <person name="Gillett W."/>
            <person name="Graham D.E."/>
            <person name="Hackett M."/>
            <person name="Haydock A.K."/>
            <person name="Kang A."/>
            <person name="Land M.L."/>
            <person name="Levy R."/>
            <person name="Lie T.J."/>
            <person name="Major T.A."/>
            <person name="Moore B.C."/>
            <person name="Porat I."/>
            <person name="Palmeiri A."/>
            <person name="Rouse G."/>
            <person name="Saenphimmachak C."/>
            <person name="Soell D."/>
            <person name="Van Dien S."/>
            <person name="Wang T."/>
            <person name="Whitman W.B."/>
            <person name="Xia Q."/>
            <person name="Zhang Y."/>
            <person name="Larimer F.W."/>
            <person name="Olson M.V."/>
            <person name="Leigh J.A."/>
        </authorList>
    </citation>
    <scope>NUCLEOTIDE SEQUENCE [LARGE SCALE GENOMIC DNA]</scope>
    <source>
        <strain>DSM 14266 / JCM 13030 / NBRC 101832 / S2 / LL</strain>
    </source>
</reference>
<reference key="2">
    <citation type="journal article" date="2013" name="PLoS ONE">
        <title>Identification of an additional minor pilin essential for piliation in the archaeon Methanococcus maripaludis.</title>
        <authorList>
            <person name="Nair D.B."/>
            <person name="Chung D.K."/>
            <person name="Schneider J."/>
            <person name="Uchida K."/>
            <person name="Aizawa S."/>
            <person name="Jarrell K.F."/>
        </authorList>
    </citation>
    <scope>EXPRESSION</scope>
    <scope>DISRUPTION PHENOTYPE</scope>
    <source>
        <strain>DSM 14266 / JCM 13030 / NBRC 101832 / S2 / LL</strain>
    </source>
</reference>
<name>Y528_METMP</name>
<proteinExistence type="evidence at transcript level"/>
<evidence type="ECO:0000250" key="1">
    <source>
        <dbReference type="UniProtKB" id="Q6LWM4"/>
    </source>
</evidence>
<evidence type="ECO:0000250" key="2">
    <source>
        <dbReference type="UniProtKB" id="Q6M0N7"/>
    </source>
</evidence>
<evidence type="ECO:0000269" key="3">
    <source>
    </source>
</evidence>
<evidence type="ECO:0000305" key="4"/>
<evidence type="ECO:0000305" key="5">
    <source>
    </source>
</evidence>
<feature type="propeptide" id="PRO_0000462042" evidence="5">
    <location>
        <begin position="1"/>
        <end position="10"/>
    </location>
</feature>
<feature type="chain" id="PRO_0000218270" description="Probable minor pilin MMP0528">
    <location>
        <begin position="11"/>
        <end position="73"/>
    </location>
</feature>
<feature type="short sequence motif" description="QXSXEXXXL" evidence="4">
    <location>
        <begin position="11"/>
        <end position="19"/>
    </location>
</feature>
<comment type="subcellular location">
    <subcellularLocation>
        <location evidence="1">Secreted</location>
    </subcellularLocation>
    <subcellularLocation>
        <location evidence="1">Cell surface</location>
    </subcellularLocation>
    <subcellularLocation>
        <location evidence="1">Fimbrium</location>
    </subcellularLocation>
</comment>
<comment type="induction">
    <text evidence="3">Expressed under standard laboratory conditions at 35 degrees Celsius.</text>
</comment>
<comment type="domain">
    <text evidence="2">Contains an amino terminal motif QXSXEXXXL, which is part of a class III signal sequence.</text>
</comment>
<comment type="PTM">
    <text evidence="5">The N-terminus is probably cleaved by the prepilin peptidase EppA, which recognizes the class III signal sequence.</text>
</comment>
<comment type="disruption phenotype">
    <text evidence="3">Disruption of the gene does not change the piliation compared with the parent cells.</text>
</comment>
<keyword id="KW-0281">Fimbrium</keyword>
<keyword id="KW-1185">Reference proteome</keyword>
<keyword id="KW-0964">Secreted</keyword>
<gene>
    <name type="ordered locus">MMP0528</name>
</gene>
<protein>
    <recommendedName>
        <fullName evidence="4">Probable minor pilin MMP0528</fullName>
    </recommendedName>
</protein>
<organism>
    <name type="scientific">Methanococcus maripaludis (strain DSM 14266 / JCM 13030 / NBRC 101832 / S2 / LL)</name>
    <dbReference type="NCBI Taxonomy" id="267377"/>
    <lineage>
        <taxon>Archaea</taxon>
        <taxon>Methanobacteriati</taxon>
        <taxon>Methanobacteriota</taxon>
        <taxon>Methanomada group</taxon>
        <taxon>Methanococci</taxon>
        <taxon>Methanococcales</taxon>
        <taxon>Methanococcaceae</taxon>
        <taxon>Methanococcus</taxon>
    </lineage>
</organism>
<dbReference type="EMBL" id="BX950229">
    <property type="protein sequence ID" value="CAF30084.1"/>
    <property type="molecule type" value="Genomic_DNA"/>
</dbReference>
<dbReference type="RefSeq" id="WP_011170472.1">
    <property type="nucleotide sequence ID" value="NC_005791.1"/>
</dbReference>
<dbReference type="SMR" id="Q6LZU5"/>
<dbReference type="STRING" id="267377.MMP0528"/>
<dbReference type="EnsemblBacteria" id="CAF30084">
    <property type="protein sequence ID" value="CAF30084"/>
    <property type="gene ID" value="MMP0528"/>
</dbReference>
<dbReference type="GeneID" id="2761235"/>
<dbReference type="KEGG" id="mmp:MMP0528"/>
<dbReference type="PATRIC" id="fig|267377.15.peg.539"/>
<dbReference type="eggNOG" id="arCOG06620">
    <property type="taxonomic scope" value="Archaea"/>
</dbReference>
<dbReference type="HOGENOM" id="CLU_197251_0_0_2"/>
<dbReference type="OrthoDB" id="60690at2157"/>
<dbReference type="Proteomes" id="UP000000590">
    <property type="component" value="Chromosome"/>
</dbReference>
<dbReference type="GO" id="GO:0009986">
    <property type="term" value="C:cell surface"/>
    <property type="evidence" value="ECO:0007669"/>
    <property type="project" value="UniProtKB-SubCell"/>
</dbReference>
<dbReference type="GO" id="GO:0005576">
    <property type="term" value="C:extracellular region"/>
    <property type="evidence" value="ECO:0007669"/>
    <property type="project" value="UniProtKB-SubCell"/>
</dbReference>
<dbReference type="GO" id="GO:0016020">
    <property type="term" value="C:membrane"/>
    <property type="evidence" value="ECO:0007669"/>
    <property type="project" value="UniProtKB-KW"/>
</dbReference>
<dbReference type="InterPro" id="IPR007166">
    <property type="entry name" value="Class3_signal_pept_motif"/>
</dbReference>
<dbReference type="Pfam" id="PF04021">
    <property type="entry name" value="Class_IIIsignal"/>
    <property type="match status" value="1"/>
</dbReference>